<name>TBPB_HAEI8</name>
<evidence type="ECO:0000255" key="1">
    <source>
        <dbReference type="PROSITE-ProRule" id="PRU00303"/>
    </source>
</evidence>
<evidence type="ECO:0000256" key="2">
    <source>
        <dbReference type="SAM" id="MobiDB-lite"/>
    </source>
</evidence>
<evidence type="ECO:0000269" key="3">
    <source>
    </source>
</evidence>
<evidence type="ECO:0000303" key="4">
    <source>
    </source>
</evidence>
<evidence type="ECO:0000303" key="5">
    <source>
    </source>
</evidence>
<evidence type="ECO:0000305" key="6"/>
<evidence type="ECO:0000305" key="7">
    <source>
    </source>
</evidence>
<proteinExistence type="evidence at protein level"/>
<feature type="signal peptide" evidence="1">
    <location>
        <begin position="1"/>
        <end position="17"/>
    </location>
</feature>
<feature type="chain" id="PRO_0000450811" description="Transferrin-binding protein B" evidence="1">
    <location>
        <begin position="18"/>
        <end position="630"/>
    </location>
</feature>
<feature type="region of interest" description="Disordered" evidence="2">
    <location>
        <begin position="26"/>
        <end position="53"/>
    </location>
</feature>
<feature type="region of interest" description="Disordered" evidence="2">
    <location>
        <begin position="280"/>
        <end position="301"/>
    </location>
</feature>
<feature type="region of interest" description="Disordered" evidence="2">
    <location>
        <begin position="591"/>
        <end position="613"/>
    </location>
</feature>
<feature type="compositionally biased region" description="Polar residues" evidence="2">
    <location>
        <begin position="32"/>
        <end position="50"/>
    </location>
</feature>
<feature type="lipid moiety-binding region" description="N-palmitoyl cysteine" evidence="1">
    <location>
        <position position="18"/>
    </location>
</feature>
<feature type="lipid moiety-binding region" description="S-diacylglycerol cysteine" evidence="1">
    <location>
        <position position="18"/>
    </location>
</feature>
<reference key="1">
    <citation type="journal article" date="2005" name="J. Bacteriol.">
        <title>Genomic sequence of an otitis media isolate of nontypeable Haemophilus influenzae: comparative study with H. influenzae serotype d, strain KW20.</title>
        <authorList>
            <person name="Harrison A."/>
            <person name="Dyer D.W."/>
            <person name="Gillaspy A."/>
            <person name="Ray W.C."/>
            <person name="Mungur R."/>
            <person name="Carson M.B."/>
            <person name="Zhong H."/>
            <person name="Gipson J."/>
            <person name="Gipson M."/>
            <person name="Johnson L.S."/>
            <person name="Lewis L."/>
            <person name="Bakaletz L.O."/>
            <person name="Munson R.S. Jr."/>
        </authorList>
    </citation>
    <scope>NUCLEOTIDE SEQUENCE [LARGE SCALE GENOMIC DNA]</scope>
    <source>
        <strain>86-028NP</strain>
    </source>
</reference>
<reference key="2">
    <citation type="journal article" date="2017" name="Front. Cell. Infect. Microbiol.">
        <title>Identification of a Large Family of Slam-Dependent Surface Lipoproteins in Gram-Negative Bacteria.</title>
        <authorList>
            <person name="Hooda Y."/>
            <person name="Lai C.C.L."/>
            <person name="Moraes T.F."/>
        </authorList>
    </citation>
    <scope>TRANSFERRIN-BINDING</scope>
    <scope>SUBCELLULAR LOCATION</scope>
    <source>
        <strain>86-028NP</strain>
    </source>
</reference>
<organism>
    <name type="scientific">Haemophilus influenzae (strain 86-028NP)</name>
    <dbReference type="NCBI Taxonomy" id="281310"/>
    <lineage>
        <taxon>Bacteria</taxon>
        <taxon>Pseudomonadati</taxon>
        <taxon>Pseudomonadota</taxon>
        <taxon>Gammaproteobacteria</taxon>
        <taxon>Pasteurellales</taxon>
        <taxon>Pasteurellaceae</taxon>
        <taxon>Haemophilus</taxon>
    </lineage>
</organism>
<protein>
    <recommendedName>
        <fullName evidence="5">Transferrin-binding protein B</fullName>
        <shortName evidence="5">TbpB</shortName>
    </recommendedName>
    <alternativeName>
        <fullName evidence="4">Transferrin-binding protein 2</fullName>
    </alternativeName>
</protein>
<dbReference type="EMBL" id="CP000057">
    <property type="protein sequence ID" value="AAX88032.1"/>
    <property type="molecule type" value="Genomic_DNA"/>
</dbReference>
<dbReference type="RefSeq" id="WP_011272339.1">
    <property type="nucleotide sequence ID" value="NC_007146.2"/>
</dbReference>
<dbReference type="SMR" id="Q4QLR5"/>
<dbReference type="KEGG" id="hit:NTHI1169"/>
<dbReference type="HOGENOM" id="CLU_024250_0_0_6"/>
<dbReference type="Proteomes" id="UP000002525">
    <property type="component" value="Chromosome"/>
</dbReference>
<dbReference type="GO" id="GO:0009279">
    <property type="term" value="C:cell outer membrane"/>
    <property type="evidence" value="ECO:0007669"/>
    <property type="project" value="UniProtKB-SubCell"/>
</dbReference>
<dbReference type="GO" id="GO:0009986">
    <property type="term" value="C:cell surface"/>
    <property type="evidence" value="ECO:0007669"/>
    <property type="project" value="UniProtKB-SubCell"/>
</dbReference>
<dbReference type="Gene3D" id="2.40.128.240">
    <property type="match status" value="1"/>
</dbReference>
<dbReference type="Gene3D" id="2.40.160.90">
    <property type="match status" value="2"/>
</dbReference>
<dbReference type="InterPro" id="IPR011250">
    <property type="entry name" value="OMP/PagP_b-brl"/>
</dbReference>
<dbReference type="InterPro" id="IPR001677">
    <property type="entry name" value="TbpB_B_D"/>
</dbReference>
<dbReference type="InterPro" id="IPR035316">
    <property type="entry name" value="TbpB_C-lobe"/>
</dbReference>
<dbReference type="InterPro" id="IPR038197">
    <property type="entry name" value="TbpB_C-lobe_sf"/>
</dbReference>
<dbReference type="InterPro" id="IPR035313">
    <property type="entry name" value="TbpB_N-lobe"/>
</dbReference>
<dbReference type="Pfam" id="PF17484">
    <property type="entry name" value="TbpB_A"/>
    <property type="match status" value="1"/>
</dbReference>
<dbReference type="Pfam" id="PF01298">
    <property type="entry name" value="TbpB_B_D"/>
    <property type="match status" value="2"/>
</dbReference>
<dbReference type="Pfam" id="PF17483">
    <property type="entry name" value="TbpB_C"/>
    <property type="match status" value="1"/>
</dbReference>
<dbReference type="SUPFAM" id="SSF56925">
    <property type="entry name" value="OMPA-like"/>
    <property type="match status" value="2"/>
</dbReference>
<dbReference type="PROSITE" id="PS51257">
    <property type="entry name" value="PROKAR_LIPOPROTEIN"/>
    <property type="match status" value="1"/>
</dbReference>
<accession>Q4QLR5</accession>
<sequence>MKSVPLITGGLSFLLSACSGGGGSFDVDDVSNPSSSKPRYQDDTSSSRTKSNLEKLSIPSLGGGMKLVAQNLSGNKEPSFLNENGYISYFSSPSTIEDDVKNVKTENKIHTNPIGLEPNRALQDPNLQKYVYSGLYYIENWKDFSKLATEKKAYSGHYGYAFYYGNKTATDLPVSGVATYKGTWDFITATKYGQNYSLFSNARGQAYFRRSATRGDIDLENNSKNGDIGLISEFSADFGTKKLTGQLSYTKRKTDIQQYEKEKLYDIDAHIYSNRFRGKVTPTKSTSDEHPFTSEGTLEGGFYGPNAEELGGKFLARDKRVFGVFSAKETPETEKEKLSKETLIDGKLITFSTKTADATTSTTASTTADVKTDEKNFTTKDISSFGEADYLLIDNYPVPLFPEGDTDDFVTSKHHDIGNKTYKVEACCKNLSYVKFGMYYEDKEKKNTNQTGQYHQFLLGLRTPSSQIPVTGNVKYLGSWFGYIGDDKTSYSTTGNKQQDKNAPAEFDVNFDNKTLTGKLKRADSQNTVFNIEATFKNGSNAFEGKATANVVIDPKNTQATSKVNFTTTVNGAFYGPHATELGGYFTYNGNNPTATNSESSSTVPSPPNSPNARAAVVFGAKRQVEKTNK</sequence>
<keyword id="KW-0998">Cell outer membrane</keyword>
<keyword id="KW-0449">Lipoprotein</keyword>
<keyword id="KW-0472">Membrane</keyword>
<keyword id="KW-0564">Palmitate</keyword>
<keyword id="KW-0732">Signal</keyword>
<keyword id="KW-0843">Virulence</keyword>
<comment type="function">
    <text evidence="7">Haemophilus acquires iron by extracting it from serum transferrin (TF) in its human host. Acts as a transferrin receptor and is required for transferrin utilization.</text>
</comment>
<comment type="subcellular location">
    <subcellularLocation>
        <location evidence="1 3">Cell outer membrane</location>
        <topology evidence="1">Lipid-anchor</topology>
    </subcellularLocation>
    <subcellularLocation>
        <location evidence="3">Cell surface</location>
    </subcellularLocation>
    <text evidence="3">When expressed in E.coli.</text>
</comment>
<comment type="similarity">
    <text evidence="6">Belongs to the TbpB family.</text>
</comment>
<gene>
    <name evidence="5" type="primary">tbpB</name>
    <name evidence="4" type="synonym">tbp2</name>
    <name type="ordered locus">NTHI1169</name>
</gene>